<protein>
    <recommendedName>
        <fullName>Uncharacterized 14.1 kDa protein in ORF1 coding strand</fullName>
    </recommendedName>
</protein>
<organismHost>
    <name type="scientific">Carica papaya</name>
    <name type="common">Papaya</name>
    <dbReference type="NCBI Taxonomy" id="3649"/>
</organismHost>
<organismHost>
    <name type="scientific">Ullucus tuberosus</name>
    <name type="common">Olluco</name>
    <dbReference type="NCBI Taxonomy" id="108055"/>
</organismHost>
<name>Y14K_PMV</name>
<reference key="1">
    <citation type="journal article" date="1989" name="J. Gen. Virol.">
        <title>Nucleotide sequence of papaya mosaic virus RNA.</title>
        <authorList>
            <person name="Sit T.L."/>
            <person name="Abouhaidar M.G."/>
            <person name="Holy S."/>
        </authorList>
    </citation>
    <scope>NUCLEOTIDE SEQUENCE [GENOMIC RNA]</scope>
</reference>
<organism>
    <name type="scientific">Papaya mosaic potexvirus</name>
    <name type="common">PMV</name>
    <dbReference type="NCBI Taxonomy" id="12181"/>
    <lineage>
        <taxon>Viruses</taxon>
        <taxon>Riboviria</taxon>
        <taxon>Orthornavirae</taxon>
        <taxon>Kitrinoviricota</taxon>
        <taxon>Alsuviricetes</taxon>
        <taxon>Tymovirales</taxon>
        <taxon>Alphaflexiviridae</taxon>
        <taxon>Potexvirus</taxon>
    </lineage>
</organism>
<dbReference type="EMBL" id="D13957">
    <property type="status" value="NOT_ANNOTATED_CDS"/>
    <property type="molecule type" value="Genomic_RNA"/>
</dbReference>
<dbReference type="PIR" id="JQ0101">
    <property type="entry name" value="JQ0101"/>
</dbReference>
<dbReference type="Proteomes" id="UP000000477">
    <property type="component" value="Genome"/>
</dbReference>
<comment type="miscellaneous">
    <text>This protein, encoded completely within ORF1, shows no similarity to other potexvirus ORF products.</text>
</comment>
<sequence>MQWWNMKTSSRKCLKSMKGKFSQKNTGTATVFKPKTPSFRCFLTNRQKMTPYFGLPLKPDWSSPTQRPIGKSTLKRGQWEKCCLNHTSGPCTCQRCPFPLRRIFGTRACMRCKRPTCPSLKT</sequence>
<keyword id="KW-1185">Reference proteome</keyword>
<accession>P20955</accession>
<proteinExistence type="predicted"/>
<feature type="chain" id="PRO_0000222646" description="Uncharacterized 14.1 kDa protein in ORF1 coding strand">
    <location>
        <begin position="1"/>
        <end position="122"/>
    </location>
</feature>